<name>RS2_PARM1</name>
<reference key="1">
    <citation type="journal article" date="2005" name="DNA Res.">
        <title>Complete genome sequence of the facultative anaerobic magnetotactic bacterium Magnetospirillum sp. strain AMB-1.</title>
        <authorList>
            <person name="Matsunaga T."/>
            <person name="Okamura Y."/>
            <person name="Fukuda Y."/>
            <person name="Wahyudi A.T."/>
            <person name="Murase Y."/>
            <person name="Takeyama H."/>
        </authorList>
    </citation>
    <scope>NUCLEOTIDE SEQUENCE [LARGE SCALE GENOMIC DNA]</scope>
    <source>
        <strain>ATCC 700264 / AMB-1</strain>
    </source>
</reference>
<keyword id="KW-0687">Ribonucleoprotein</keyword>
<keyword id="KW-0689">Ribosomal protein</keyword>
<accession>Q2W4C3</accession>
<sequence length="266" mass="28604">MALPTFTMRQLVEAGVHFGHNTRRWNPKMASYLFGIRNGIHIIDLQQSVPMLHRAMQAVRDVTAGGGRVLFVGTKHQASDVVAESAKRCGQYFVNHRWLGGMLTNWKTISNSIRRLRELDEQLASGALAGLTKKEQLVLSREKEKLDRALGGIKDMGGLPDILFIIDTNKEALAVQEANKLGIPVVAIIDSNCDPAGITYPIPGNDDAIRAIQTYCDLMSGAVLDGIQAEITRGGGDVGAAAEAPVEQIPEVVAEAAAEEAAAPQA</sequence>
<protein>
    <recommendedName>
        <fullName evidence="1">Small ribosomal subunit protein uS2</fullName>
    </recommendedName>
    <alternativeName>
        <fullName evidence="2">30S ribosomal protein S2</fullName>
    </alternativeName>
</protein>
<organism>
    <name type="scientific">Paramagnetospirillum magneticum (strain ATCC 700264 / AMB-1)</name>
    <name type="common">Magnetospirillum magneticum</name>
    <dbReference type="NCBI Taxonomy" id="342108"/>
    <lineage>
        <taxon>Bacteria</taxon>
        <taxon>Pseudomonadati</taxon>
        <taxon>Pseudomonadota</taxon>
        <taxon>Alphaproteobacteria</taxon>
        <taxon>Rhodospirillales</taxon>
        <taxon>Magnetospirillaceae</taxon>
        <taxon>Paramagnetospirillum</taxon>
    </lineage>
</organism>
<comment type="similarity">
    <text evidence="1">Belongs to the universal ribosomal protein uS2 family.</text>
</comment>
<proteinExistence type="inferred from homology"/>
<dbReference type="EMBL" id="AP007255">
    <property type="protein sequence ID" value="BAE51302.1"/>
    <property type="molecule type" value="Genomic_DNA"/>
</dbReference>
<dbReference type="RefSeq" id="WP_011384879.1">
    <property type="nucleotide sequence ID" value="NC_007626.1"/>
</dbReference>
<dbReference type="SMR" id="Q2W4C3"/>
<dbReference type="STRING" id="342108.amb2498"/>
<dbReference type="KEGG" id="mag:amb2498"/>
<dbReference type="HOGENOM" id="CLU_040318_2_1_5"/>
<dbReference type="OrthoDB" id="9808036at2"/>
<dbReference type="Proteomes" id="UP000007058">
    <property type="component" value="Chromosome"/>
</dbReference>
<dbReference type="GO" id="GO:0022627">
    <property type="term" value="C:cytosolic small ribosomal subunit"/>
    <property type="evidence" value="ECO:0007669"/>
    <property type="project" value="TreeGrafter"/>
</dbReference>
<dbReference type="GO" id="GO:0003735">
    <property type="term" value="F:structural constituent of ribosome"/>
    <property type="evidence" value="ECO:0007669"/>
    <property type="project" value="InterPro"/>
</dbReference>
<dbReference type="GO" id="GO:0006412">
    <property type="term" value="P:translation"/>
    <property type="evidence" value="ECO:0007669"/>
    <property type="project" value="UniProtKB-UniRule"/>
</dbReference>
<dbReference type="CDD" id="cd01425">
    <property type="entry name" value="RPS2"/>
    <property type="match status" value="1"/>
</dbReference>
<dbReference type="FunFam" id="1.10.287.610:FF:000001">
    <property type="entry name" value="30S ribosomal protein S2"/>
    <property type="match status" value="1"/>
</dbReference>
<dbReference type="Gene3D" id="3.40.50.10490">
    <property type="entry name" value="Glucose-6-phosphate isomerase like protein, domain 1"/>
    <property type="match status" value="1"/>
</dbReference>
<dbReference type="Gene3D" id="1.10.287.610">
    <property type="entry name" value="Helix hairpin bin"/>
    <property type="match status" value="1"/>
</dbReference>
<dbReference type="HAMAP" id="MF_00291_B">
    <property type="entry name" value="Ribosomal_uS2_B"/>
    <property type="match status" value="1"/>
</dbReference>
<dbReference type="InterPro" id="IPR001865">
    <property type="entry name" value="Ribosomal_uS2"/>
</dbReference>
<dbReference type="InterPro" id="IPR005706">
    <property type="entry name" value="Ribosomal_uS2_bac/mit/plastid"/>
</dbReference>
<dbReference type="InterPro" id="IPR018130">
    <property type="entry name" value="Ribosomal_uS2_CS"/>
</dbReference>
<dbReference type="InterPro" id="IPR023591">
    <property type="entry name" value="Ribosomal_uS2_flav_dom_sf"/>
</dbReference>
<dbReference type="NCBIfam" id="TIGR01011">
    <property type="entry name" value="rpsB_bact"/>
    <property type="match status" value="1"/>
</dbReference>
<dbReference type="PANTHER" id="PTHR12534">
    <property type="entry name" value="30S RIBOSOMAL PROTEIN S2 PROKARYOTIC AND ORGANELLAR"/>
    <property type="match status" value="1"/>
</dbReference>
<dbReference type="PANTHER" id="PTHR12534:SF0">
    <property type="entry name" value="SMALL RIBOSOMAL SUBUNIT PROTEIN US2M"/>
    <property type="match status" value="1"/>
</dbReference>
<dbReference type="Pfam" id="PF00318">
    <property type="entry name" value="Ribosomal_S2"/>
    <property type="match status" value="1"/>
</dbReference>
<dbReference type="PRINTS" id="PR00395">
    <property type="entry name" value="RIBOSOMALS2"/>
</dbReference>
<dbReference type="SUPFAM" id="SSF52313">
    <property type="entry name" value="Ribosomal protein S2"/>
    <property type="match status" value="1"/>
</dbReference>
<dbReference type="PROSITE" id="PS00962">
    <property type="entry name" value="RIBOSOMAL_S2_1"/>
    <property type="match status" value="1"/>
</dbReference>
<dbReference type="PROSITE" id="PS00963">
    <property type="entry name" value="RIBOSOMAL_S2_2"/>
    <property type="match status" value="1"/>
</dbReference>
<feature type="chain" id="PRO_1000003993" description="Small ribosomal subunit protein uS2">
    <location>
        <begin position="1"/>
        <end position="266"/>
    </location>
</feature>
<evidence type="ECO:0000255" key="1">
    <source>
        <dbReference type="HAMAP-Rule" id="MF_00291"/>
    </source>
</evidence>
<evidence type="ECO:0000305" key="2"/>
<gene>
    <name evidence="1" type="primary">rpsB</name>
    <name type="ordered locus">amb2498</name>
</gene>